<comment type="function">
    <text evidence="1">Plasma membrane osmosensor that activates the high osmolarity glycerol (HOG) MAPK signaling pathway in response to high osmolarity.</text>
</comment>
<comment type="subunit">
    <text evidence="1">Forms homooligomers.</text>
</comment>
<comment type="subcellular location">
    <subcellularLocation>
        <location evidence="1">Cell membrane</location>
        <topology evidence="1">Multi-pass membrane protein</topology>
    </subcellularLocation>
</comment>
<comment type="similarity">
    <text evidence="5">Belongs to the SHO1 family.</text>
</comment>
<keyword id="KW-1003">Cell membrane</keyword>
<keyword id="KW-0472">Membrane</keyword>
<keyword id="KW-1185">Reference proteome</keyword>
<keyword id="KW-0728">SH3 domain</keyword>
<keyword id="KW-0346">Stress response</keyword>
<keyword id="KW-0812">Transmembrane</keyword>
<keyword id="KW-1133">Transmembrane helix</keyword>
<reference key="1">
    <citation type="journal article" date="2011" name="PLoS Genet.">
        <title>Comparative genomic analysis of human fungal pathogens causing paracoccidioidomycosis.</title>
        <authorList>
            <person name="Desjardins C.A."/>
            <person name="Champion M.D."/>
            <person name="Holder J.W."/>
            <person name="Muszewska A."/>
            <person name="Goldberg J."/>
            <person name="Bailao A.M."/>
            <person name="Brigido M.M."/>
            <person name="Ferreira M.E."/>
            <person name="Garcia A.M."/>
            <person name="Grynberg M."/>
            <person name="Gujja S."/>
            <person name="Heiman D.I."/>
            <person name="Henn M.R."/>
            <person name="Kodira C.D."/>
            <person name="Leon-Narvaez H."/>
            <person name="Longo L.V.G."/>
            <person name="Ma L.-J."/>
            <person name="Malavazi I."/>
            <person name="Matsuo A.L."/>
            <person name="Morais F.V."/>
            <person name="Pereira M."/>
            <person name="Rodriguez-Brito S."/>
            <person name="Sakthikumar S."/>
            <person name="Salem-Izacc S.M."/>
            <person name="Sykes S.M."/>
            <person name="Teixeira M.M."/>
            <person name="Vallejo M.C."/>
            <person name="Walter M.E."/>
            <person name="Yandava C."/>
            <person name="Young S."/>
            <person name="Zeng Q."/>
            <person name="Zucker J."/>
            <person name="Felipe M.S."/>
            <person name="Goldman G.H."/>
            <person name="Haas B.J."/>
            <person name="McEwen J.G."/>
            <person name="Nino-Vega G."/>
            <person name="Puccia R."/>
            <person name="San-Blas G."/>
            <person name="Soares C.M."/>
            <person name="Birren B.W."/>
            <person name="Cuomo C.A."/>
        </authorList>
    </citation>
    <scope>NUCLEOTIDE SEQUENCE [LARGE SCALE GENOMIC DNA]</scope>
    <source>
        <strain>Pb18</strain>
    </source>
</reference>
<protein>
    <recommendedName>
        <fullName>High osmolarity signaling protein SHO1</fullName>
    </recommendedName>
    <alternativeName>
        <fullName>Osmosensor SHO1</fullName>
    </alternativeName>
</protein>
<name>SHO1_PARBD</name>
<proteinExistence type="inferred from homology"/>
<sequence length="309" mass="32905">MAQLDVNNIMGDPFALVTLSMAMIGWLLSLVTCVISDVQGIFPNYVWWAVTYMFVTIIGLAIVMGSQTSHVYAIAIVGYLAAGLCFTTLAVNSLVYDGSATKQAAAAGFILQSMVIIIWIFYFGSTPRSSTRGYLDHSGGAGNEHHSYRNSKPISNSYGRPETTVSGNQPPQMYTSAQLNGFETSTPIAGYPSTATDNPNNAGRFGQAPIGSQTNLTPGNNPVVGAGGISLGMGGATDPSNANEISQPTEYPYRAKAIYSYEANPDDANEISFAKHEILDVSDVSGRWWQAKKATGETGIAPSNYLILL</sequence>
<feature type="chain" id="PRO_0000410387" description="High osmolarity signaling protein SHO1">
    <location>
        <begin position="1"/>
        <end position="309"/>
    </location>
</feature>
<feature type="topological domain" description="Cytoplasmic" evidence="5">
    <location>
        <begin position="1"/>
        <end position="14"/>
    </location>
</feature>
<feature type="transmembrane region" description="Helical" evidence="2">
    <location>
        <begin position="15"/>
        <end position="35"/>
    </location>
</feature>
<feature type="topological domain" description="Extracellular" evidence="5">
    <location>
        <begin position="36"/>
        <end position="44"/>
    </location>
</feature>
<feature type="transmembrane region" description="Helical" evidence="2">
    <location>
        <begin position="45"/>
        <end position="65"/>
    </location>
</feature>
<feature type="topological domain" description="Cytoplasmic" evidence="2">
    <location>
        <begin position="66"/>
        <end position="70"/>
    </location>
</feature>
<feature type="transmembrane region" description="Helical" evidence="2">
    <location>
        <begin position="71"/>
        <end position="91"/>
    </location>
</feature>
<feature type="topological domain" description="Extracellular" evidence="2">
    <location>
        <begin position="92"/>
        <end position="103"/>
    </location>
</feature>
<feature type="transmembrane region" description="Helical" evidence="2">
    <location>
        <begin position="104"/>
        <end position="124"/>
    </location>
</feature>
<feature type="topological domain" description="Cytoplasmic" evidence="2">
    <location>
        <begin position="125"/>
        <end position="309"/>
    </location>
</feature>
<feature type="domain" description="SH3" evidence="3">
    <location>
        <begin position="250"/>
        <end position="309"/>
    </location>
</feature>
<feature type="region of interest" description="Disordered" evidence="4">
    <location>
        <begin position="134"/>
        <end position="175"/>
    </location>
</feature>
<feature type="compositionally biased region" description="Polar residues" evidence="4">
    <location>
        <begin position="150"/>
        <end position="175"/>
    </location>
</feature>
<dbReference type="EMBL" id="KN275967">
    <property type="protein sequence ID" value="EEH42479.2"/>
    <property type="molecule type" value="Genomic_DNA"/>
</dbReference>
<dbReference type="RefSeq" id="XP_010762666.1">
    <property type="nucleotide sequence ID" value="XM_010764364.1"/>
</dbReference>
<dbReference type="SMR" id="C1GJ63"/>
<dbReference type="FunCoup" id="C1GJ63">
    <property type="interactions" value="117"/>
</dbReference>
<dbReference type="STRING" id="502780.C1GJ63"/>
<dbReference type="GeneID" id="22585818"/>
<dbReference type="KEGG" id="pbn:PADG_07299"/>
<dbReference type="VEuPathDB" id="FungiDB:PADG_07299"/>
<dbReference type="eggNOG" id="ENOG502QW7A">
    <property type="taxonomic scope" value="Eukaryota"/>
</dbReference>
<dbReference type="HOGENOM" id="CLU_043316_1_0_1"/>
<dbReference type="InParanoid" id="C1GJ63"/>
<dbReference type="OMA" id="NIVWIFY"/>
<dbReference type="OrthoDB" id="39936at33183"/>
<dbReference type="Proteomes" id="UP000001628">
    <property type="component" value="Unassembled WGS sequence"/>
</dbReference>
<dbReference type="GO" id="GO:0005886">
    <property type="term" value="C:plasma membrane"/>
    <property type="evidence" value="ECO:0007669"/>
    <property type="project" value="UniProtKB-SubCell"/>
</dbReference>
<dbReference type="CDD" id="cd11855">
    <property type="entry name" value="SH3_Sho1p"/>
    <property type="match status" value="1"/>
</dbReference>
<dbReference type="FunFam" id="2.30.30.40:FF:000213">
    <property type="entry name" value="High osmolarity signaling protein SHO1"/>
    <property type="match status" value="1"/>
</dbReference>
<dbReference type="Gene3D" id="2.30.30.40">
    <property type="entry name" value="SH3 Domains"/>
    <property type="match status" value="1"/>
</dbReference>
<dbReference type="InterPro" id="IPR036028">
    <property type="entry name" value="SH3-like_dom_sf"/>
</dbReference>
<dbReference type="InterPro" id="IPR001452">
    <property type="entry name" value="SH3_domain"/>
</dbReference>
<dbReference type="InterPro" id="IPR035522">
    <property type="entry name" value="Sho1_SH3"/>
</dbReference>
<dbReference type="Pfam" id="PF00018">
    <property type="entry name" value="SH3_1"/>
    <property type="match status" value="1"/>
</dbReference>
<dbReference type="SMART" id="SM00326">
    <property type="entry name" value="SH3"/>
    <property type="match status" value="1"/>
</dbReference>
<dbReference type="SUPFAM" id="SSF50044">
    <property type="entry name" value="SH3-domain"/>
    <property type="match status" value="1"/>
</dbReference>
<dbReference type="PROSITE" id="PS50002">
    <property type="entry name" value="SH3"/>
    <property type="match status" value="1"/>
</dbReference>
<gene>
    <name type="primary">SHO1</name>
    <name type="ORF">PADG_07299</name>
</gene>
<accession>C1GJ63</accession>
<organism>
    <name type="scientific">Paracoccidioides brasiliensis (strain Pb18)</name>
    <dbReference type="NCBI Taxonomy" id="502780"/>
    <lineage>
        <taxon>Eukaryota</taxon>
        <taxon>Fungi</taxon>
        <taxon>Dikarya</taxon>
        <taxon>Ascomycota</taxon>
        <taxon>Pezizomycotina</taxon>
        <taxon>Eurotiomycetes</taxon>
        <taxon>Eurotiomycetidae</taxon>
        <taxon>Onygenales</taxon>
        <taxon>Ajellomycetaceae</taxon>
        <taxon>Paracoccidioides</taxon>
    </lineage>
</organism>
<evidence type="ECO:0000250" key="1"/>
<evidence type="ECO:0000255" key="2"/>
<evidence type="ECO:0000255" key="3">
    <source>
        <dbReference type="PROSITE-ProRule" id="PRU00192"/>
    </source>
</evidence>
<evidence type="ECO:0000256" key="4">
    <source>
        <dbReference type="SAM" id="MobiDB-lite"/>
    </source>
</evidence>
<evidence type="ECO:0000305" key="5"/>